<proteinExistence type="inferred from homology"/>
<organism>
    <name type="scientific">Streptococcus pyogenes serotype M1</name>
    <dbReference type="NCBI Taxonomy" id="301447"/>
    <lineage>
        <taxon>Bacteria</taxon>
        <taxon>Bacillati</taxon>
        <taxon>Bacillota</taxon>
        <taxon>Bacilli</taxon>
        <taxon>Lactobacillales</taxon>
        <taxon>Streptococcaceae</taxon>
        <taxon>Streptococcus</taxon>
    </lineage>
</organism>
<accession>P0C0H1</accession>
<accession>Q08494</accession>
<accession>Q48W06</accession>
<accession>Q54865</accession>
<accession>Q54868</accession>
<comment type="function">
    <text evidence="1">Glycosaminoglycan synthesis. The hyaluronic acid capsule is involved in the pathogenicity of group A Streptococci; it may be the major virulence determinant (By similarity).</text>
</comment>
<comment type="catalytic activity">
    <reaction>
        <text>[hyaluronan](n) + UDP-N-acetyl-alpha-D-glucosamine = N-acetyl-beta-D-glucosaminyl-(1-&gt;4)-[hyaluronan](n) + UDP + H(+)</text>
        <dbReference type="Rhea" id="RHEA:20465"/>
        <dbReference type="Rhea" id="RHEA-COMP:12583"/>
        <dbReference type="Rhea" id="RHEA-COMP:12585"/>
        <dbReference type="ChEBI" id="CHEBI:15378"/>
        <dbReference type="ChEBI" id="CHEBI:57705"/>
        <dbReference type="ChEBI" id="CHEBI:58223"/>
        <dbReference type="ChEBI" id="CHEBI:132153"/>
        <dbReference type="ChEBI" id="CHEBI:132154"/>
        <dbReference type="EC" id="2.4.1.212"/>
    </reaction>
</comment>
<comment type="catalytic activity">
    <reaction>
        <text>N-acetyl-beta-D-glucosaminyl-(1-&gt;4)-[hyaluronan](n) + UDP-alpha-D-glucuronate = [hyaluronan](n+1) + UDP + H(+)</text>
        <dbReference type="Rhea" id="RHEA:12528"/>
        <dbReference type="Rhea" id="RHEA-COMP:12585"/>
        <dbReference type="Rhea" id="RHEA-COMP:12587"/>
        <dbReference type="ChEBI" id="CHEBI:15378"/>
        <dbReference type="ChEBI" id="CHEBI:58052"/>
        <dbReference type="ChEBI" id="CHEBI:58223"/>
        <dbReference type="ChEBI" id="CHEBI:132153"/>
        <dbReference type="ChEBI" id="CHEBI:132154"/>
        <dbReference type="EC" id="2.4.1.212"/>
    </reaction>
</comment>
<comment type="cofactor">
    <cofactor evidence="1">
        <name>Mg(2+)</name>
        <dbReference type="ChEBI" id="CHEBI:18420"/>
    </cofactor>
</comment>
<comment type="pathway">
    <text>Glycan biosynthesis; hyaluronan biosynthesis.</text>
</comment>
<comment type="subcellular location">
    <subcellularLocation>
        <location evidence="1">Cell membrane</location>
        <topology evidence="1">Multi-pass membrane protein</topology>
    </subcellularLocation>
</comment>
<comment type="similarity">
    <text evidence="3">Belongs to the NodC/HAS family.</text>
</comment>
<comment type="caution">
    <text evidence="3">It is uncertain whether Met-1 or Met-25 is the initiator.</text>
</comment>
<feature type="chain" id="PRO_0000197165" description="Hyaluronan synthase">
    <location>
        <begin position="1"/>
        <end position="419"/>
    </location>
</feature>
<feature type="transmembrane region" description="Helical" evidence="2">
    <location>
        <begin position="8"/>
        <end position="28"/>
    </location>
</feature>
<feature type="transmembrane region" description="Helical" evidence="2">
    <location>
        <begin position="33"/>
        <end position="53"/>
    </location>
</feature>
<feature type="transmembrane region" description="Helical" evidence="2">
    <location>
        <begin position="318"/>
        <end position="338"/>
    </location>
</feature>
<feature type="transmembrane region" description="Helical" evidence="2">
    <location>
        <begin position="345"/>
        <end position="365"/>
    </location>
</feature>
<feature type="transmembrane region" description="Helical" evidence="2">
    <location>
        <begin position="376"/>
        <end position="396"/>
    </location>
</feature>
<feature type="sequence conflict" description="In Ref. 2; AAZ52469." evidence="3" ref="2">
    <original>V</original>
    <variation>I</variation>
    <location>
        <position position="10"/>
    </location>
</feature>
<feature type="sequence conflict" description="In Ref. 2; AAZ52469." evidence="3" ref="2">
    <original>K</original>
    <variation>R</variation>
    <location>
        <position position="304"/>
    </location>
</feature>
<sequence>MPIFKKTLIVLSFIFLISILIYLNMYLFGTSTVGIYGVILITYLVIKLGLSFLYEPFKGKPHDYKVAAVIPSYNEDAESLLETLKSVLAQTYPLSEIYIVDDGSSNTDAIQLIEEYVNREVDICRNVIVHRSLVNKGKRHAQAWAFERSDADVFLTVDSDTYIYPNALEELLKSFNDETVYAATGHLNARNRQTNLLTRLTDIRYDNAFGVERAAQSLTGNILVCSGPLSIYRREVIIPNLERYKNQTFLGLPVSIGDDRCLTNYAIDLGRTVYQSTARCDTDVPFQLKSYLKQQNRWNKSFFKESIISVKKILSNPIVALWTIFEVVMFMMLIVAIGNLLFNQAIQLDLIKLFAFLSIIFIVALCRNVHYMIKHPASFLLSPLYGILHLFVLQPLKLYSLCTIKNTEWGTRKKVTIFK</sequence>
<name>HASA_STRP1</name>
<evidence type="ECO:0000250" key="1"/>
<evidence type="ECO:0000255" key="2"/>
<evidence type="ECO:0000305" key="3"/>
<protein>
    <recommendedName>
        <fullName>Hyaluronan synthase</fullName>
        <ecNumber>2.4.1.212</ecNumber>
    </recommendedName>
    <alternativeName>
        <fullName>Hyaluronate synthase</fullName>
    </alternativeName>
    <alternativeName>
        <fullName>Hyaluronic acid synthase</fullName>
        <shortName>HA synthase</shortName>
    </alternativeName>
</protein>
<gene>
    <name type="primary">hasA</name>
    <name type="ordered locus">SPy_2200</name>
    <name type="ordered locus">M5005_Spy1851</name>
</gene>
<dbReference type="EC" id="2.4.1.212"/>
<dbReference type="EMBL" id="AE004092">
    <property type="protein sequence ID" value="AAK34828.1"/>
    <property type="molecule type" value="Genomic_DNA"/>
</dbReference>
<dbReference type="EMBL" id="CP000017">
    <property type="protein sequence ID" value="AAZ52469.1"/>
    <property type="molecule type" value="Genomic_DNA"/>
</dbReference>
<dbReference type="RefSeq" id="NP_270107.2">
    <property type="nucleotide sequence ID" value="NC_002737.2"/>
</dbReference>
<dbReference type="SMR" id="P0C0H1"/>
<dbReference type="PaxDb" id="1314-HKU360_01961"/>
<dbReference type="KEGG" id="spy:SPy_2200"/>
<dbReference type="KEGG" id="spz:M5005_Spy1851"/>
<dbReference type="PATRIC" id="fig|160490.10.peg.1905"/>
<dbReference type="HOGENOM" id="CLU_029695_4_0_9"/>
<dbReference type="OMA" id="HTEQHYL"/>
<dbReference type="UniPathway" id="UPA00341"/>
<dbReference type="Proteomes" id="UP000000750">
    <property type="component" value="Chromosome"/>
</dbReference>
<dbReference type="GO" id="GO:0005886">
    <property type="term" value="C:plasma membrane"/>
    <property type="evidence" value="ECO:0007669"/>
    <property type="project" value="UniProtKB-SubCell"/>
</dbReference>
<dbReference type="GO" id="GO:0050501">
    <property type="term" value="F:hyaluronan synthase activity"/>
    <property type="evidence" value="ECO:0007669"/>
    <property type="project" value="UniProtKB-EC"/>
</dbReference>
<dbReference type="GO" id="GO:0085029">
    <property type="term" value="P:extracellular matrix assembly"/>
    <property type="evidence" value="ECO:0007669"/>
    <property type="project" value="TreeGrafter"/>
</dbReference>
<dbReference type="GO" id="GO:0030213">
    <property type="term" value="P:hyaluronan biosynthetic process"/>
    <property type="evidence" value="ECO:0007669"/>
    <property type="project" value="UniProtKB-UniPathway"/>
</dbReference>
<dbReference type="CDD" id="cd06423">
    <property type="entry name" value="CESA_like"/>
    <property type="match status" value="1"/>
</dbReference>
<dbReference type="Gene3D" id="3.90.550.10">
    <property type="entry name" value="Spore Coat Polysaccharide Biosynthesis Protein SpsA, Chain A"/>
    <property type="match status" value="1"/>
</dbReference>
<dbReference type="InterPro" id="IPR001173">
    <property type="entry name" value="Glyco_trans_2-like"/>
</dbReference>
<dbReference type="InterPro" id="IPR029044">
    <property type="entry name" value="Nucleotide-diphossugar_trans"/>
</dbReference>
<dbReference type="PANTHER" id="PTHR22913">
    <property type="entry name" value="HYALURONAN SYNTHASE"/>
    <property type="match status" value="1"/>
</dbReference>
<dbReference type="PANTHER" id="PTHR22913:SF12">
    <property type="entry name" value="MANNURONAN SYNTHASE"/>
    <property type="match status" value="1"/>
</dbReference>
<dbReference type="Pfam" id="PF00535">
    <property type="entry name" value="Glycos_transf_2"/>
    <property type="match status" value="1"/>
</dbReference>
<dbReference type="SUPFAM" id="SSF53448">
    <property type="entry name" value="Nucleotide-diphospho-sugar transferases"/>
    <property type="match status" value="1"/>
</dbReference>
<keyword id="KW-0972">Capsule biogenesis/degradation</keyword>
<keyword id="KW-1003">Cell membrane</keyword>
<keyword id="KW-0328">Glycosyltransferase</keyword>
<keyword id="KW-0472">Membrane</keyword>
<keyword id="KW-1185">Reference proteome</keyword>
<keyword id="KW-0808">Transferase</keyword>
<keyword id="KW-0812">Transmembrane</keyword>
<keyword id="KW-1133">Transmembrane helix</keyword>
<keyword id="KW-0843">Virulence</keyword>
<reference key="1">
    <citation type="journal article" date="2001" name="Proc. Natl. Acad. Sci. U.S.A.">
        <title>Complete genome sequence of an M1 strain of Streptococcus pyogenes.</title>
        <authorList>
            <person name="Ferretti J.J."/>
            <person name="McShan W.M."/>
            <person name="Ajdic D.J."/>
            <person name="Savic D.J."/>
            <person name="Savic G."/>
            <person name="Lyon K."/>
            <person name="Primeaux C."/>
            <person name="Sezate S."/>
            <person name="Suvorov A.N."/>
            <person name="Kenton S."/>
            <person name="Lai H.S."/>
            <person name="Lin S.P."/>
            <person name="Qian Y."/>
            <person name="Jia H.G."/>
            <person name="Najar F.Z."/>
            <person name="Ren Q."/>
            <person name="Zhu H."/>
            <person name="Song L."/>
            <person name="White J."/>
            <person name="Yuan X."/>
            <person name="Clifton S.W."/>
            <person name="Roe B.A."/>
            <person name="McLaughlin R.E."/>
        </authorList>
    </citation>
    <scope>NUCLEOTIDE SEQUENCE [LARGE SCALE GENOMIC DNA]</scope>
    <source>
        <strain>ATCC 700294 / SF370 / Serotype M1</strain>
    </source>
</reference>
<reference key="2">
    <citation type="journal article" date="2005" name="J. Infect. Dis.">
        <title>Evolutionary origin and emergence of a highly successful clone of serotype M1 group A Streptococcus involved multiple horizontal gene transfer events.</title>
        <authorList>
            <person name="Sumby P."/>
            <person name="Porcella S.F."/>
            <person name="Madrigal A.G."/>
            <person name="Barbian K.D."/>
            <person name="Virtaneva K."/>
            <person name="Ricklefs S.M."/>
            <person name="Sturdevant D.E."/>
            <person name="Graham M.R."/>
            <person name="Vuopio-Varkila J."/>
            <person name="Hoe N.P."/>
            <person name="Musser J.M."/>
        </authorList>
    </citation>
    <scope>NUCLEOTIDE SEQUENCE [LARGE SCALE GENOMIC DNA]</scope>
    <source>
        <strain>ATCC BAA-947 / MGAS5005 / Serotype M1</strain>
    </source>
</reference>